<accession>Q29JP8</accession>
<name>FICD_DROPS</name>
<reference key="1">
    <citation type="journal article" date="2005" name="Genome Res.">
        <title>Comparative genome sequencing of Drosophila pseudoobscura: chromosomal, gene, and cis-element evolution.</title>
        <authorList>
            <person name="Richards S."/>
            <person name="Liu Y."/>
            <person name="Bettencourt B.R."/>
            <person name="Hradecky P."/>
            <person name="Letovsky S."/>
            <person name="Nielsen R."/>
            <person name="Thornton K."/>
            <person name="Hubisz M.J."/>
            <person name="Chen R."/>
            <person name="Meisel R.P."/>
            <person name="Couronne O."/>
            <person name="Hua S."/>
            <person name="Smith M.A."/>
            <person name="Zhang P."/>
            <person name="Liu J."/>
            <person name="Bussemaker H.J."/>
            <person name="van Batenburg M.F."/>
            <person name="Howells S.L."/>
            <person name="Scherer S.E."/>
            <person name="Sodergren E."/>
            <person name="Matthews B.B."/>
            <person name="Crosby M.A."/>
            <person name="Schroeder A.J."/>
            <person name="Ortiz-Barrientos D."/>
            <person name="Rives C.M."/>
            <person name="Metzker M.L."/>
            <person name="Muzny D.M."/>
            <person name="Scott G."/>
            <person name="Steffen D."/>
            <person name="Wheeler D.A."/>
            <person name="Worley K.C."/>
            <person name="Havlak P."/>
            <person name="Durbin K.J."/>
            <person name="Egan A."/>
            <person name="Gill R."/>
            <person name="Hume J."/>
            <person name="Morgan M.B."/>
            <person name="Miner G."/>
            <person name="Hamilton C."/>
            <person name="Huang Y."/>
            <person name="Waldron L."/>
            <person name="Verduzco D."/>
            <person name="Clerc-Blankenburg K.P."/>
            <person name="Dubchak I."/>
            <person name="Noor M.A.F."/>
            <person name="Anderson W."/>
            <person name="White K.P."/>
            <person name="Clark A.G."/>
            <person name="Schaeffer S.W."/>
            <person name="Gelbart W.M."/>
            <person name="Weinstock G.M."/>
            <person name="Gibbs R.A."/>
        </authorList>
    </citation>
    <scope>NUCLEOTIDE SEQUENCE [LARGE SCALE GENOMIC DNA]</scope>
    <source>
        <strain>MV2-25 / Tucson 14011-0121.94</strain>
    </source>
</reference>
<organism>
    <name type="scientific">Drosophila pseudoobscura pseudoobscura</name>
    <name type="common">Fruit fly</name>
    <dbReference type="NCBI Taxonomy" id="46245"/>
    <lineage>
        <taxon>Eukaryota</taxon>
        <taxon>Metazoa</taxon>
        <taxon>Ecdysozoa</taxon>
        <taxon>Arthropoda</taxon>
        <taxon>Hexapoda</taxon>
        <taxon>Insecta</taxon>
        <taxon>Pterygota</taxon>
        <taxon>Neoptera</taxon>
        <taxon>Endopterygota</taxon>
        <taxon>Diptera</taxon>
        <taxon>Brachycera</taxon>
        <taxon>Muscomorpha</taxon>
        <taxon>Ephydroidea</taxon>
        <taxon>Drosophilidae</taxon>
        <taxon>Drosophila</taxon>
        <taxon>Sophophora</taxon>
    </lineage>
</organism>
<dbReference type="EC" id="2.7.7.108" evidence="2"/>
<dbReference type="EC" id="3.1.4.-" evidence="1 2"/>
<dbReference type="EMBL" id="CH379062">
    <property type="protein sequence ID" value="EAL32913.2"/>
    <property type="molecule type" value="Genomic_DNA"/>
</dbReference>
<dbReference type="RefSeq" id="XP_001355854.2">
    <property type="nucleotide sequence ID" value="XM_001355818.3"/>
</dbReference>
<dbReference type="SMR" id="Q29JP8"/>
<dbReference type="FunCoup" id="Q29JP8">
    <property type="interactions" value="272"/>
</dbReference>
<dbReference type="STRING" id="46245.Q29JP8"/>
<dbReference type="EnsemblMetazoa" id="FBtr0287194">
    <property type="protein sequence ID" value="FBpp0285632"/>
    <property type="gene ID" value="FBgn0081839"/>
</dbReference>
<dbReference type="KEGG" id="dpo:4816233"/>
<dbReference type="CTD" id="33897"/>
<dbReference type="eggNOG" id="KOG3824">
    <property type="taxonomic scope" value="Eukaryota"/>
</dbReference>
<dbReference type="HOGENOM" id="CLU_040460_0_0_1"/>
<dbReference type="InParanoid" id="Q29JP8"/>
<dbReference type="OMA" id="QLRCQLW"/>
<dbReference type="Proteomes" id="UP000001819">
    <property type="component" value="Chromosome 4"/>
</dbReference>
<dbReference type="Bgee" id="FBgn0081839">
    <property type="expression patterns" value="Expressed in male reproductive system and 3 other cell types or tissues"/>
</dbReference>
<dbReference type="GO" id="GO:0016020">
    <property type="term" value="C:membrane"/>
    <property type="evidence" value="ECO:0007669"/>
    <property type="project" value="UniProtKB-SubCell"/>
</dbReference>
<dbReference type="GO" id="GO:0070733">
    <property type="term" value="F:AMPylase activity"/>
    <property type="evidence" value="ECO:0000250"/>
    <property type="project" value="UniProtKB"/>
</dbReference>
<dbReference type="GO" id="GO:0005524">
    <property type="term" value="F:ATP binding"/>
    <property type="evidence" value="ECO:0007669"/>
    <property type="project" value="UniProtKB-KW"/>
</dbReference>
<dbReference type="GO" id="GO:0016787">
    <property type="term" value="F:hydrolase activity"/>
    <property type="evidence" value="ECO:0007669"/>
    <property type="project" value="UniProtKB-KW"/>
</dbReference>
<dbReference type="GO" id="GO:0018117">
    <property type="term" value="P:protein adenylylation"/>
    <property type="evidence" value="ECO:0000250"/>
    <property type="project" value="UniProtKB"/>
</dbReference>
<dbReference type="FunFam" id="1.10.3290.10:FF:000001">
    <property type="entry name" value="adenosine monophosphate-protein transferase FICD"/>
    <property type="match status" value="1"/>
</dbReference>
<dbReference type="FunFam" id="1.25.40.10:FF:000522">
    <property type="entry name" value="Protein adenylyltransferase Fic"/>
    <property type="match status" value="1"/>
</dbReference>
<dbReference type="Gene3D" id="1.10.3290.10">
    <property type="entry name" value="Fido-like domain"/>
    <property type="match status" value="1"/>
</dbReference>
<dbReference type="Gene3D" id="1.25.40.10">
    <property type="entry name" value="Tetratricopeptide repeat domain"/>
    <property type="match status" value="1"/>
</dbReference>
<dbReference type="InterPro" id="IPR003812">
    <property type="entry name" value="Fido"/>
</dbReference>
<dbReference type="InterPro" id="IPR036597">
    <property type="entry name" value="Fido-like_dom_sf"/>
</dbReference>
<dbReference type="InterPro" id="IPR040198">
    <property type="entry name" value="Fido_containing"/>
</dbReference>
<dbReference type="InterPro" id="IPR011990">
    <property type="entry name" value="TPR-like_helical_dom_sf"/>
</dbReference>
<dbReference type="PANTHER" id="PTHR13504">
    <property type="entry name" value="FIDO DOMAIN-CONTAINING PROTEIN DDB_G0283145"/>
    <property type="match status" value="1"/>
</dbReference>
<dbReference type="PANTHER" id="PTHR13504:SF34">
    <property type="entry name" value="PROTEIN ADENYLYLTRANSFERASE FICD"/>
    <property type="match status" value="1"/>
</dbReference>
<dbReference type="Pfam" id="PF02661">
    <property type="entry name" value="Fic"/>
    <property type="match status" value="1"/>
</dbReference>
<dbReference type="SUPFAM" id="SSF140931">
    <property type="entry name" value="Fic-like"/>
    <property type="match status" value="1"/>
</dbReference>
<dbReference type="SUPFAM" id="SSF48452">
    <property type="entry name" value="TPR-like"/>
    <property type="match status" value="1"/>
</dbReference>
<dbReference type="PROSITE" id="PS51459">
    <property type="entry name" value="FIDO"/>
    <property type="match status" value="1"/>
</dbReference>
<dbReference type="PROSITE" id="PS50293">
    <property type="entry name" value="TPR_REGION"/>
    <property type="match status" value="1"/>
</dbReference>
<gene>
    <name type="ORF">GA21854</name>
</gene>
<comment type="function">
    <text evidence="1 2">Protein that can both mediate the addition of adenosine 5'-monophosphate (AMP) to specific residues of target proteins (AMPylation), and the removal of the same modification from target proteins (de-AMPylation), depending on the context (By similarity). The side chain of Glu-261 determines which of the two opposing activities (AMPylase or de-AMPylase) will take place (By similarity). Acts as a key regulator of the unfolded protein response (UPR) by mediating AMPylation or de-AMPylation of Hsc70-3/BiP. In unstressed cells, acts as an adenylyltransferase by mediating AMPylation of Hsc70-3/BiP at 'Thr-518', thereby inactivating it. In response to endoplasmic reticulum stress, acts as a phosphodiesterase by mediating removal of ATP (de-AMPylation) from Hsc70-3/BiP at 'Thr-518', leading to restore HSPA5/BiP activity (By similarity).</text>
</comment>
<comment type="catalytic activity">
    <reaction evidence="3">
        <text>L-tyrosyl-[protein] + ATP = O-(5'-adenylyl)-L-tyrosyl-[protein] + diphosphate</text>
        <dbReference type="Rhea" id="RHEA:54288"/>
        <dbReference type="Rhea" id="RHEA-COMP:10136"/>
        <dbReference type="Rhea" id="RHEA-COMP:13846"/>
        <dbReference type="ChEBI" id="CHEBI:30616"/>
        <dbReference type="ChEBI" id="CHEBI:33019"/>
        <dbReference type="ChEBI" id="CHEBI:46858"/>
        <dbReference type="ChEBI" id="CHEBI:83624"/>
        <dbReference type="EC" id="2.7.7.108"/>
    </reaction>
</comment>
<comment type="catalytic activity">
    <reaction evidence="2">
        <text>L-threonyl-[protein] + ATP = 3-O-(5'-adenylyl)-L-threonyl-[protein] + diphosphate</text>
        <dbReference type="Rhea" id="RHEA:54292"/>
        <dbReference type="Rhea" id="RHEA-COMP:11060"/>
        <dbReference type="Rhea" id="RHEA-COMP:13847"/>
        <dbReference type="ChEBI" id="CHEBI:30013"/>
        <dbReference type="ChEBI" id="CHEBI:30616"/>
        <dbReference type="ChEBI" id="CHEBI:33019"/>
        <dbReference type="ChEBI" id="CHEBI:138113"/>
        <dbReference type="EC" id="2.7.7.108"/>
    </reaction>
</comment>
<comment type="catalytic activity">
    <reaction evidence="2">
        <text>3-O-(5'-adenylyl)-L-threonyl-[protein] + H2O = L-threonyl-[protein] + AMP + H(+)</text>
        <dbReference type="Rhea" id="RHEA:55932"/>
        <dbReference type="Rhea" id="RHEA-COMP:11060"/>
        <dbReference type="Rhea" id="RHEA-COMP:13847"/>
        <dbReference type="ChEBI" id="CHEBI:15377"/>
        <dbReference type="ChEBI" id="CHEBI:15378"/>
        <dbReference type="ChEBI" id="CHEBI:30013"/>
        <dbReference type="ChEBI" id="CHEBI:138113"/>
        <dbReference type="ChEBI" id="CHEBI:456215"/>
    </reaction>
</comment>
<comment type="activity regulation">
    <text evidence="1 3">The side chain of Glu-261 determines which of the two opposing activities (AMPylase or de-AMPylase) will take place. In response to endoplasmic reticulum stress, mediates de-AMPylase activity (By similarity). Adenylyltransferase activity is inhibited by the inhibitory helix present at the N-terminus: Glu-261 binds ATP and competes with ATP-binding at Arg-400, thereby preventing adenylyltransferase activity (By similarity). In unstressed cells, disengagement of Glu-261 promotes adenylyltransferase activity (By similarity). Activation dissociates ATP-binding from Glu-261, allowing ordered binding of the entire ATP moiety with the alpha-phosphate in an orientation that is productive for accepting an incoming target hydroxyl side chain (By similarity).</text>
</comment>
<comment type="subunit">
    <text evidence="2">Homodimer.</text>
</comment>
<comment type="subcellular location">
    <subcellularLocation>
        <location evidence="2">Membrane</location>
        <topology evidence="2">Single-pass membrane protein</topology>
    </subcellularLocation>
</comment>
<comment type="domain">
    <text evidence="3">The fido domain mediates the adenylyltransferase activity.</text>
</comment>
<comment type="similarity">
    <text evidence="6">Belongs to the fic family.</text>
</comment>
<keyword id="KW-0067">ATP-binding</keyword>
<keyword id="KW-0378">Hydrolase</keyword>
<keyword id="KW-0472">Membrane</keyword>
<keyword id="KW-0547">Nucleotide-binding</keyword>
<keyword id="KW-0548">Nucleotidyltransferase</keyword>
<keyword id="KW-1185">Reference proteome</keyword>
<keyword id="KW-0677">Repeat</keyword>
<keyword id="KW-0802">TPR repeat</keyword>
<keyword id="KW-0808">Transferase</keyword>
<keyword id="KW-0812">Transmembrane</keyword>
<keyword id="KW-1133">Transmembrane helix</keyword>
<sequence>MAMTILHASEKVNAEAEATTCPPTEKVKEEQQQQEQLQHSKTSKRVQFYRFALFFIAGSFAAFSFHALTSSSSWRLRQLHHLPNAHYLQTREEFAVYSVEELNAFKEFYDKSISDSVGASYSEAEQTNIKEALGALRLAQDMHLSGKDDKASRLFEHALALAPKHPEVLLRYGEFLEHNQRNIVLADQYYFQALTLCPSNSEALANRQRTAEVVQTLDERRLQSLDSKRDALSAIHESSSALRRAKKEAYFQHIYHSVGIEGNTMTLAQTRSILETRMAVDGKSIDEHNEILGMDLAMKYINASLVQKLEITIKDILELHRRVLGHVDPIEGGEFRRNQVYVGGHVPPGPGDLALLMQRFERWLNSEHSSSLHPVNYAAYAHYKLVHIHPFIDGNGRTSRLLMNTLLMRAGYPPVIIPKQQRSKYYHFLKLANEGDIRPFVRFIADCTEKTLDLYLWATSDLPQQIPMLIQTESEAGEQLAQMRSPHISAQSASIPEFYEFSGSGFQP</sequence>
<evidence type="ECO:0000250" key="1">
    <source>
        <dbReference type="UniProtKB" id="A0A061I403"/>
    </source>
</evidence>
<evidence type="ECO:0000250" key="2">
    <source>
        <dbReference type="UniProtKB" id="Q8SWV6"/>
    </source>
</evidence>
<evidence type="ECO:0000250" key="3">
    <source>
        <dbReference type="UniProtKB" id="Q9BVA6"/>
    </source>
</evidence>
<evidence type="ECO:0000255" key="4"/>
<evidence type="ECO:0000255" key="5">
    <source>
        <dbReference type="PROSITE-ProRule" id="PRU00791"/>
    </source>
</evidence>
<evidence type="ECO:0000305" key="6"/>
<feature type="chain" id="PRO_0000381788" description="Protein adenylyltransferase Fic">
    <location>
        <begin position="1"/>
        <end position="508"/>
    </location>
</feature>
<feature type="transmembrane region" description="Helical" evidence="4">
    <location>
        <begin position="48"/>
        <end position="70"/>
    </location>
</feature>
<feature type="repeat" description="TPR 1">
    <location>
        <begin position="132"/>
        <end position="165"/>
    </location>
</feature>
<feature type="repeat" description="TPR 2">
    <location>
        <begin position="166"/>
        <end position="200"/>
    </location>
</feature>
<feature type="domain" description="Fido" evidence="5">
    <location>
        <begin position="311"/>
        <end position="446"/>
    </location>
</feature>
<feature type="short sequence motif" description="Inhibitory (S/T)XXXE(G/N) motif">
    <location>
        <begin position="257"/>
        <end position="262"/>
    </location>
</feature>
<feature type="active site" evidence="1">
    <location>
        <position position="389"/>
    </location>
</feature>
<feature type="binding site" evidence="3">
    <location>
        <position position="261"/>
    </location>
    <ligand>
        <name>ATP</name>
        <dbReference type="ChEBI" id="CHEBI:30616"/>
    </ligand>
</feature>
<feature type="binding site" evidence="3">
    <location>
        <begin position="342"/>
        <end position="345"/>
    </location>
    <ligand>
        <name>ATP</name>
        <dbReference type="ChEBI" id="CHEBI:30616"/>
    </ligand>
</feature>
<feature type="binding site" evidence="3">
    <location>
        <begin position="393"/>
        <end position="400"/>
    </location>
    <ligand>
        <name>ATP</name>
        <dbReference type="ChEBI" id="CHEBI:30616"/>
    </ligand>
</feature>
<feature type="binding site" evidence="3">
    <location>
        <begin position="425"/>
        <end position="426"/>
    </location>
    <ligand>
        <name>ATP</name>
        <dbReference type="ChEBI" id="CHEBI:30616"/>
    </ligand>
</feature>
<feature type="binding site" evidence="3">
    <location>
        <position position="433"/>
    </location>
    <ligand>
        <name>ATP</name>
        <dbReference type="ChEBI" id="CHEBI:30616"/>
    </ligand>
</feature>
<feature type="site" description="Important for autoinhibition of adenylyltransferase activity" evidence="3">
    <location>
        <position position="261"/>
    </location>
</feature>
<proteinExistence type="inferred from homology"/>
<protein>
    <recommendedName>
        <fullName>Protein adenylyltransferase Fic</fullName>
        <ecNumber evidence="2">2.7.7.108</ecNumber>
    </recommendedName>
    <alternativeName>
        <fullName evidence="6">De-AMPylase Fic</fullName>
        <ecNumber evidence="1 2">3.1.4.-</ecNumber>
    </alternativeName>
</protein>